<evidence type="ECO:0000255" key="1">
    <source>
        <dbReference type="HAMAP-Rule" id="MF_01691"/>
    </source>
</evidence>
<dbReference type="EC" id="2.3.1.89" evidence="1"/>
<dbReference type="EMBL" id="CP000724">
    <property type="protein sequence ID" value="ABR49333.1"/>
    <property type="molecule type" value="Genomic_DNA"/>
</dbReference>
<dbReference type="RefSeq" id="WP_012064298.1">
    <property type="nucleotide sequence ID" value="NC_009633.1"/>
</dbReference>
<dbReference type="SMR" id="A6TT15"/>
<dbReference type="STRING" id="293826.Amet_3195"/>
<dbReference type="KEGG" id="amt:Amet_3195"/>
<dbReference type="eggNOG" id="COG2171">
    <property type="taxonomic scope" value="Bacteria"/>
</dbReference>
<dbReference type="HOGENOM" id="CLU_103751_0_0_9"/>
<dbReference type="OrthoDB" id="9788080at2"/>
<dbReference type="UniPathway" id="UPA00034">
    <property type="reaction ID" value="UER00022"/>
</dbReference>
<dbReference type="Proteomes" id="UP000001572">
    <property type="component" value="Chromosome"/>
</dbReference>
<dbReference type="GO" id="GO:0047200">
    <property type="term" value="F:tetrahydrodipicolinate N-acetyltransferase activity"/>
    <property type="evidence" value="ECO:0007669"/>
    <property type="project" value="UniProtKB-EC"/>
</dbReference>
<dbReference type="GO" id="GO:0019877">
    <property type="term" value="P:diaminopimelate biosynthetic process"/>
    <property type="evidence" value="ECO:0007669"/>
    <property type="project" value="UniProtKB-UniRule"/>
</dbReference>
<dbReference type="GO" id="GO:0009089">
    <property type="term" value="P:lysine biosynthetic process via diaminopimelate"/>
    <property type="evidence" value="ECO:0007669"/>
    <property type="project" value="UniProtKB-UniRule"/>
</dbReference>
<dbReference type="CDD" id="cd03350">
    <property type="entry name" value="LbH_THP_succinylT"/>
    <property type="match status" value="1"/>
</dbReference>
<dbReference type="Gene3D" id="2.160.10.10">
    <property type="entry name" value="Hexapeptide repeat proteins"/>
    <property type="match status" value="1"/>
</dbReference>
<dbReference type="Gene3D" id="3.30.70.250">
    <property type="entry name" value="Malonyl-CoA ACP transacylase, ACP-binding"/>
    <property type="match status" value="1"/>
</dbReference>
<dbReference type="HAMAP" id="MF_01691">
    <property type="entry name" value="DapH"/>
    <property type="match status" value="1"/>
</dbReference>
<dbReference type="InterPro" id="IPR019873">
    <property type="entry name" value="DapH"/>
</dbReference>
<dbReference type="InterPro" id="IPR013710">
    <property type="entry name" value="DapH_N"/>
</dbReference>
<dbReference type="InterPro" id="IPR001451">
    <property type="entry name" value="Hexapep"/>
</dbReference>
<dbReference type="InterPro" id="IPR018357">
    <property type="entry name" value="Hexapep_transf_CS"/>
</dbReference>
<dbReference type="InterPro" id="IPR050179">
    <property type="entry name" value="Trans_hexapeptide_repeat"/>
</dbReference>
<dbReference type="InterPro" id="IPR011004">
    <property type="entry name" value="Trimer_LpxA-like_sf"/>
</dbReference>
<dbReference type="NCBIfam" id="TIGR03532">
    <property type="entry name" value="DapD_Ac"/>
    <property type="match status" value="1"/>
</dbReference>
<dbReference type="PANTHER" id="PTHR43300:SF10">
    <property type="entry name" value="2,3,4,5-TETRAHYDROPYRIDINE-2,6-DICARBOXYLATE N-ACETYLTRANSFERASE"/>
    <property type="match status" value="1"/>
</dbReference>
<dbReference type="PANTHER" id="PTHR43300">
    <property type="entry name" value="ACETYLTRANSFERASE"/>
    <property type="match status" value="1"/>
</dbReference>
<dbReference type="Pfam" id="PF08503">
    <property type="entry name" value="DapH_N"/>
    <property type="match status" value="1"/>
</dbReference>
<dbReference type="Pfam" id="PF00132">
    <property type="entry name" value="Hexapep"/>
    <property type="match status" value="1"/>
</dbReference>
<dbReference type="Pfam" id="PF14602">
    <property type="entry name" value="Hexapep_2"/>
    <property type="match status" value="1"/>
</dbReference>
<dbReference type="SUPFAM" id="SSF51161">
    <property type="entry name" value="Trimeric LpxA-like enzymes"/>
    <property type="match status" value="1"/>
</dbReference>
<dbReference type="PROSITE" id="PS00101">
    <property type="entry name" value="HEXAPEP_TRANSFERASES"/>
    <property type="match status" value="1"/>
</dbReference>
<comment type="function">
    <text evidence="1">Catalyzes the transfer of an acetyl group from acetyl-CoA to tetrahydrodipicolinate.</text>
</comment>
<comment type="catalytic activity">
    <reaction evidence="1">
        <text>(S)-2,3,4,5-tetrahydrodipicolinate + acetyl-CoA + H2O = L-2-acetamido-6-oxoheptanedioate + CoA</text>
        <dbReference type="Rhea" id="RHEA:13085"/>
        <dbReference type="ChEBI" id="CHEBI:15377"/>
        <dbReference type="ChEBI" id="CHEBI:16845"/>
        <dbReference type="ChEBI" id="CHEBI:57287"/>
        <dbReference type="ChEBI" id="CHEBI:57288"/>
        <dbReference type="ChEBI" id="CHEBI:58117"/>
        <dbReference type="EC" id="2.3.1.89"/>
    </reaction>
</comment>
<comment type="pathway">
    <text evidence="1">Amino-acid biosynthesis; L-lysine biosynthesis via DAP pathway; LL-2,6-diaminopimelate from (S)-tetrahydrodipicolinate (acetylase route): step 1/3.</text>
</comment>
<comment type="similarity">
    <text evidence="1">Belongs to the transferase hexapeptide repeat family. DapH subfamily.</text>
</comment>
<feature type="chain" id="PRO_0000376622" description="2,3,4,5-tetrahydropyridine-2,6-dicarboxylate N-acetyltransferase">
    <location>
        <begin position="1"/>
        <end position="237"/>
    </location>
</feature>
<proteinExistence type="inferred from homology"/>
<name>DAPH_ALKMQ</name>
<keyword id="KW-0012">Acyltransferase</keyword>
<keyword id="KW-0028">Amino-acid biosynthesis</keyword>
<keyword id="KW-0220">Diaminopimelate biosynthesis</keyword>
<keyword id="KW-0457">Lysine biosynthesis</keyword>
<keyword id="KW-1185">Reference proteome</keyword>
<keyword id="KW-0677">Repeat</keyword>
<keyword id="KW-0808">Transferase</keyword>
<gene>
    <name evidence="1" type="primary">dapH</name>
    <name type="ordered locus">Amet_3195</name>
</gene>
<protein>
    <recommendedName>
        <fullName evidence="1">2,3,4,5-tetrahydropyridine-2,6-dicarboxylate N-acetyltransferase</fullName>
        <ecNumber evidence="1">2.3.1.89</ecNumber>
    </recommendedName>
    <alternativeName>
        <fullName evidence="1">Tetrahydrodipicolinate N-acetyltransferase</fullName>
        <shortName evidence="1">THP acetyltransferase</shortName>
        <shortName evidence="1">Tetrahydropicolinate acetylase</shortName>
    </alternativeName>
</protein>
<organism>
    <name type="scientific">Alkaliphilus metalliredigens (strain QYMF)</name>
    <dbReference type="NCBI Taxonomy" id="293826"/>
    <lineage>
        <taxon>Bacteria</taxon>
        <taxon>Bacillati</taxon>
        <taxon>Bacillota</taxon>
        <taxon>Clostridia</taxon>
        <taxon>Peptostreptococcales</taxon>
        <taxon>Natronincolaceae</taxon>
        <taxon>Alkaliphilus</taxon>
    </lineage>
</organism>
<reference key="1">
    <citation type="journal article" date="2016" name="Genome Announc.">
        <title>Complete genome sequence of Alkaliphilus metalliredigens strain QYMF, an alkaliphilic and metal-reducing bacterium isolated from borax-contaminated leachate ponds.</title>
        <authorList>
            <person name="Hwang C."/>
            <person name="Copeland A."/>
            <person name="Lucas S."/>
            <person name="Lapidus A."/>
            <person name="Barry K."/>
            <person name="Detter J.C."/>
            <person name="Glavina Del Rio T."/>
            <person name="Hammon N."/>
            <person name="Israni S."/>
            <person name="Dalin E."/>
            <person name="Tice H."/>
            <person name="Pitluck S."/>
            <person name="Chertkov O."/>
            <person name="Brettin T."/>
            <person name="Bruce D."/>
            <person name="Han C."/>
            <person name="Schmutz J."/>
            <person name="Larimer F."/>
            <person name="Land M.L."/>
            <person name="Hauser L."/>
            <person name="Kyrpides N."/>
            <person name="Mikhailova N."/>
            <person name="Ye Q."/>
            <person name="Zhou J."/>
            <person name="Richardson P."/>
            <person name="Fields M.W."/>
        </authorList>
    </citation>
    <scope>NUCLEOTIDE SEQUENCE [LARGE SCALE GENOMIC DNA]</scope>
    <source>
        <strain>QYMF</strain>
    </source>
</reference>
<sequence>MDAREIIKYIQESEKKTPVKVYIKGNLSEINWEQEGIKSFITGNTGVIFGEWKIVSKLMEANQKNIEDFVLENDRANSAIPLLDLKGIHARIEPGAIIREKVEIGNNAVIMMGASINIGAVIGEGTMIDMNVVVGGRGTIGKNCHIGAGAVIAGVIEPPSATPVIIEDDVVIGANAVVLEGIRVGKGSVVAAGAVVVQDVPPNVVVAGTPARVIKEIDEKTKSKTEIVKELRSLIEE</sequence>
<accession>A6TT15</accession>